<proteinExistence type="evidence at protein level"/>
<feature type="chain" id="PRO_0000430518" description="Acetate--CoA ligase [ADP-forming] I">
    <location>
        <begin position="1"/>
        <end position="685"/>
    </location>
</feature>
<feature type="domain" description="ATP-grasp" evidence="1">
    <location>
        <begin position="477"/>
        <end position="513"/>
    </location>
</feature>
<feature type="binding site" evidence="1">
    <location>
        <begin position="503"/>
        <end position="514"/>
    </location>
    <ligand>
        <name>ATP</name>
        <dbReference type="ChEBI" id="CHEBI:30616"/>
    </ligand>
</feature>
<protein>
    <recommendedName>
        <fullName evidence="3">Acetate--CoA ligase [ADP-forming] I</fullName>
        <ecNumber evidence="2">6.2.1.13</ecNumber>
    </recommendedName>
    <alternativeName>
        <fullName evidence="3">ADP-forming acetyl coenzyme A synthetase I</fullName>
        <shortName evidence="3">ACS I</shortName>
    </alternativeName>
</protein>
<keyword id="KW-0067">ATP-binding</keyword>
<keyword id="KW-0436">Ligase</keyword>
<keyword id="KW-0547">Nucleotide-binding</keyword>
<keyword id="KW-1185">Reference proteome</keyword>
<accession>O29057</accession>
<evidence type="ECO:0000255" key="1">
    <source>
        <dbReference type="PROSITE-ProRule" id="PRU00409"/>
    </source>
</evidence>
<evidence type="ECO:0000269" key="2">
    <source>
    </source>
</evidence>
<evidence type="ECO:0000305" key="3"/>
<evidence type="ECO:0000312" key="4">
    <source>
        <dbReference type="EMBL" id="AAB90033.1"/>
    </source>
</evidence>
<reference key="1">
    <citation type="journal article" date="1997" name="Nature">
        <title>The complete genome sequence of the hyperthermophilic, sulphate-reducing archaeon Archaeoglobus fulgidus.</title>
        <authorList>
            <person name="Klenk H.-P."/>
            <person name="Clayton R.A."/>
            <person name="Tomb J.-F."/>
            <person name="White O."/>
            <person name="Nelson K.E."/>
            <person name="Ketchum K.A."/>
            <person name="Dodson R.J."/>
            <person name="Gwinn M.L."/>
            <person name="Hickey E.K."/>
            <person name="Peterson J.D."/>
            <person name="Richardson D.L."/>
            <person name="Kerlavage A.R."/>
            <person name="Graham D.E."/>
            <person name="Kyrpides N.C."/>
            <person name="Fleischmann R.D."/>
            <person name="Quackenbush J."/>
            <person name="Lee N.H."/>
            <person name="Sutton G.G."/>
            <person name="Gill S.R."/>
            <person name="Kirkness E.F."/>
            <person name="Dougherty B.A."/>
            <person name="McKenney K."/>
            <person name="Adams M.D."/>
            <person name="Loftus B.J."/>
            <person name="Peterson S.N."/>
            <person name="Reich C.I."/>
            <person name="McNeil L.K."/>
            <person name="Badger J.H."/>
            <person name="Glodek A."/>
            <person name="Zhou L."/>
            <person name="Overbeek R."/>
            <person name="Gocayne J.D."/>
            <person name="Weidman J.F."/>
            <person name="McDonald L.A."/>
            <person name="Utterback T.R."/>
            <person name="Cotton M.D."/>
            <person name="Spriggs T."/>
            <person name="Artiach P."/>
            <person name="Kaine B.P."/>
            <person name="Sykes S.M."/>
            <person name="Sadow P.W."/>
            <person name="D'Andrea K.P."/>
            <person name="Bowman C."/>
            <person name="Fujii C."/>
            <person name="Garland S.A."/>
            <person name="Mason T.M."/>
            <person name="Olsen G.J."/>
            <person name="Fraser C.M."/>
            <person name="Smith H.O."/>
            <person name="Woese C.R."/>
            <person name="Venter J.C."/>
        </authorList>
    </citation>
    <scope>NUCLEOTIDE SEQUENCE [LARGE SCALE GENOMIC DNA]</scope>
    <source>
        <strain>ATCC 49558 / DSM 4304 / JCM 9628 / NBRC 100126 / VC-16</strain>
    </source>
</reference>
<reference key="2">
    <citation type="journal article" date="2002" name="J. Bacteriol.">
        <title>Novel type of ADP-forming acetyl coenzyme A synthetase in hyperthermophilic archaea: heterologous expression and characterization of isoenzymes from the sulfate reducer Archaeoglobus fulgidus and the methanogen Methanococcus jannaschii.</title>
        <authorList>
            <person name="Musfeldt M."/>
            <person name="Schoenheit P."/>
        </authorList>
    </citation>
    <scope>FUNCTION</scope>
    <scope>CATALYTIC ACTIVITY</scope>
    <scope>ACTIVITY REGULATION</scope>
    <scope>BIOPHYSICOCHEMICAL PROPERTIES</scope>
    <scope>SUBUNIT</scope>
</reference>
<comment type="function">
    <text evidence="2">Catalyzes the reversible formation of acetate and ATP from acetyl-CoA by using ADP and phosphate. Can use other substrates such as propionyl-CoA and butyryl-CoA, but not phenylacetyl-CoA. Seems to be involved primarily in the conversion of acetyl-CoA to acetate. Participates in the degradation of branched-chain amino acids via branched-chain-acyl-CoA esters.</text>
</comment>
<comment type="catalytic activity">
    <reaction evidence="2">
        <text>acetate + ATP + CoA = acetyl-CoA + ADP + phosphate</text>
        <dbReference type="Rhea" id="RHEA:15081"/>
        <dbReference type="ChEBI" id="CHEBI:30089"/>
        <dbReference type="ChEBI" id="CHEBI:30616"/>
        <dbReference type="ChEBI" id="CHEBI:43474"/>
        <dbReference type="ChEBI" id="CHEBI:57287"/>
        <dbReference type="ChEBI" id="CHEBI:57288"/>
        <dbReference type="ChEBI" id="CHEBI:456216"/>
        <dbReference type="EC" id="6.2.1.13"/>
    </reaction>
</comment>
<comment type="activity regulation">
    <text evidence="2">Activity requires divalent metal cations.</text>
</comment>
<comment type="biophysicochemical properties">
    <kinetics>
        <KM evidence="2">10 uM for acetyl-CoA</KM>
        <KM evidence="2">7 uM for ADP</KM>
        <KM evidence="2">110 uM for phosphate</KM>
        <KM evidence="2">340 uM for acetate</KM>
        <KM evidence="2">100 uM for phenylacetate</KM>
        <KM evidence="2">133 uM for ATP</KM>
        <KM evidence="2">27 uM for CoA</KM>
        <text evidence="2">kcat is 95 sec(-1) for acetyl-CoA. kcat is 70 sec(-1) for ADP. kcat is 58 sec(-1) for phosphate. kcat is 138 sec(-1) for acetate. kcat is 11.5 sec(-1) for phenylacetate. kcat is 150 sec(-1) for ATP. kcat is 110 sec(-1) for CoA.</text>
    </kinetics>
    <phDependence>
        <text evidence="2">Optimum pH is 7.0.</text>
    </phDependence>
    <temperatureDependence>
        <text evidence="2">Optimum temperature is 77 degrees Celsius.</text>
    </temperatureDependence>
</comment>
<comment type="subunit">
    <text evidence="2">Homodimer.</text>
</comment>
<comment type="similarity">
    <text evidence="3">In the N-terminal section; belongs to the acetate CoA ligase alpha subunit family.</text>
</comment>
<comment type="similarity">
    <text evidence="3">In the C-terminal section; belongs to the acetate CoA ligase beta subunit family.</text>
</comment>
<sequence length="685" mass="74698">MERLFYPKVVAVIGASPQEGKVGNTIMKNLRNFSGTVYAVNPKYREILGFPCYPSVLKIPENVDLAIIVVPAKLVPKAVEECGRKDVEGAVVISAGFKEAGIEGAKLERELVEVAERYGVKLVGPNCLGMINTEIAMNATFSRVAPEKGRIAFLSQSGAFILAVLEWSKRNGVGFSKVVSLGNKAMLDESDFLEYLAKDDSTDVILIYMEGVEDGRKFMRVAKSVARRKPVVVMKAGKSQSGAKAASSHTGSLAGSYEAYRAAFRQSGVIEASSVEELFDFALLLLKYRKAGNLAILTNSGGPGVMAADACDQFGVPLANFNFETIRKLKEFLPAESNFYNPVDILGDASAERFSRSLQILSEDENVDIVLTILTPTAQMDFLKAAESVVGKNAVCCFMGGESVDESERILRSSGIPNFFDPVRAVRAISVLGRYSKISAKERVKEDLDVSVEREKAEEIIEKLLESGGRVVGAEGLPVLEAYGIEVAPYGIARNVDEARDIAESIGYPVVLKVVSPDVVHKSDVGGVKLNVGENDLEKAFFEILSNVEGRMPKARIEGVLVQKMVDGGKELIVGMKRDPQFGPMIMFGMGGVYVEVLKDVSFRIAPITRREAHEMVREVKAYRILRGLRGEKPADIDAIADLLLRVSKLSLDHPEVLEMDLNPVKVFESGYAVVDFRMVLGEEV</sequence>
<gene>
    <name evidence="4" type="ordered locus">AF_1211</name>
</gene>
<dbReference type="EC" id="6.2.1.13" evidence="2"/>
<dbReference type="EMBL" id="AE000782">
    <property type="protein sequence ID" value="AAB90033.1"/>
    <property type="molecule type" value="Genomic_DNA"/>
</dbReference>
<dbReference type="PIR" id="B69401">
    <property type="entry name" value="B69401"/>
</dbReference>
<dbReference type="RefSeq" id="WP_010878706.1">
    <property type="nucleotide sequence ID" value="NC_000917.1"/>
</dbReference>
<dbReference type="SMR" id="O29057"/>
<dbReference type="STRING" id="224325.AF_1211"/>
<dbReference type="PaxDb" id="224325-AF_1211"/>
<dbReference type="EnsemblBacteria" id="AAB90033">
    <property type="protein sequence ID" value="AAB90033"/>
    <property type="gene ID" value="AF_1211"/>
</dbReference>
<dbReference type="GeneID" id="1484435"/>
<dbReference type="KEGG" id="afu:AF_1211"/>
<dbReference type="eggNOG" id="arCOG01340">
    <property type="taxonomic scope" value="Archaea"/>
</dbReference>
<dbReference type="HOGENOM" id="CLU_007415_3_1_2"/>
<dbReference type="OrthoDB" id="50180at2157"/>
<dbReference type="PhylomeDB" id="O29057"/>
<dbReference type="BioCyc" id="MetaCyc:AF_RS06130-MONOMER"/>
<dbReference type="BRENDA" id="6.2.1.B11">
    <property type="organism ID" value="414"/>
</dbReference>
<dbReference type="SABIO-RK" id="O29057"/>
<dbReference type="Proteomes" id="UP000002199">
    <property type="component" value="Chromosome"/>
</dbReference>
<dbReference type="GO" id="GO:0043758">
    <property type="term" value="F:acetate-CoA ligase (ADP-forming) activity"/>
    <property type="evidence" value="ECO:0007669"/>
    <property type="project" value="UniProtKB-EC"/>
</dbReference>
<dbReference type="GO" id="GO:0005524">
    <property type="term" value="F:ATP binding"/>
    <property type="evidence" value="ECO:0007669"/>
    <property type="project" value="UniProtKB-KW"/>
</dbReference>
<dbReference type="GO" id="GO:0046872">
    <property type="term" value="F:metal ion binding"/>
    <property type="evidence" value="ECO:0007669"/>
    <property type="project" value="InterPro"/>
</dbReference>
<dbReference type="FunFam" id="3.30.1490.20:FF:000020">
    <property type="entry name" value="Protein lysine acetyltransferase"/>
    <property type="match status" value="1"/>
</dbReference>
<dbReference type="Gene3D" id="3.30.1490.20">
    <property type="entry name" value="ATP-grasp fold, A domain"/>
    <property type="match status" value="1"/>
</dbReference>
<dbReference type="Gene3D" id="3.30.470.20">
    <property type="entry name" value="ATP-grasp fold, B domain"/>
    <property type="match status" value="1"/>
</dbReference>
<dbReference type="Gene3D" id="3.40.50.720">
    <property type="entry name" value="NAD(P)-binding Rossmann-like Domain"/>
    <property type="match status" value="1"/>
</dbReference>
<dbReference type="Gene3D" id="3.40.50.261">
    <property type="entry name" value="Succinyl-CoA synthetase domains"/>
    <property type="match status" value="2"/>
</dbReference>
<dbReference type="InterPro" id="IPR014089">
    <property type="entry name" value="AcCoA-synth-alpha"/>
</dbReference>
<dbReference type="InterPro" id="IPR051538">
    <property type="entry name" value="Acyl-CoA_Synth/Transferase"/>
</dbReference>
<dbReference type="InterPro" id="IPR011761">
    <property type="entry name" value="ATP-grasp"/>
</dbReference>
<dbReference type="InterPro" id="IPR013815">
    <property type="entry name" value="ATP_grasp_subdomain_1"/>
</dbReference>
<dbReference type="InterPro" id="IPR003781">
    <property type="entry name" value="CoA-bd"/>
</dbReference>
<dbReference type="InterPro" id="IPR036291">
    <property type="entry name" value="NAD(P)-bd_dom_sf"/>
</dbReference>
<dbReference type="InterPro" id="IPR032875">
    <property type="entry name" value="Succ_CoA_lig_flav_dom"/>
</dbReference>
<dbReference type="InterPro" id="IPR016102">
    <property type="entry name" value="Succinyl-CoA_synth-like"/>
</dbReference>
<dbReference type="NCBIfam" id="TIGR02717">
    <property type="entry name" value="AcCoA-syn-alpha"/>
    <property type="match status" value="1"/>
</dbReference>
<dbReference type="PANTHER" id="PTHR43334:SF1">
    <property type="entry name" value="3-HYDROXYPROPIONATE--COA LIGASE [ADP-FORMING]"/>
    <property type="match status" value="1"/>
</dbReference>
<dbReference type="PANTHER" id="PTHR43334">
    <property type="entry name" value="ACETATE--COA LIGASE [ADP-FORMING]"/>
    <property type="match status" value="1"/>
</dbReference>
<dbReference type="Pfam" id="PF13549">
    <property type="entry name" value="ATP-grasp_5"/>
    <property type="match status" value="1"/>
</dbReference>
<dbReference type="Pfam" id="PF13380">
    <property type="entry name" value="CoA_binding_2"/>
    <property type="match status" value="1"/>
</dbReference>
<dbReference type="Pfam" id="PF13607">
    <property type="entry name" value="Succ_CoA_lig"/>
    <property type="match status" value="1"/>
</dbReference>
<dbReference type="SMART" id="SM00881">
    <property type="entry name" value="CoA_binding"/>
    <property type="match status" value="1"/>
</dbReference>
<dbReference type="SUPFAM" id="SSF56059">
    <property type="entry name" value="Glutathione synthetase ATP-binding domain-like"/>
    <property type="match status" value="1"/>
</dbReference>
<dbReference type="SUPFAM" id="SSF51735">
    <property type="entry name" value="NAD(P)-binding Rossmann-fold domains"/>
    <property type="match status" value="1"/>
</dbReference>
<dbReference type="SUPFAM" id="SSF52210">
    <property type="entry name" value="Succinyl-CoA synthetase domains"/>
    <property type="match status" value="2"/>
</dbReference>
<dbReference type="PROSITE" id="PS50975">
    <property type="entry name" value="ATP_GRASP"/>
    <property type="match status" value="1"/>
</dbReference>
<organism>
    <name type="scientific">Archaeoglobus fulgidus (strain ATCC 49558 / DSM 4304 / JCM 9628 / NBRC 100126 / VC-16)</name>
    <dbReference type="NCBI Taxonomy" id="224325"/>
    <lineage>
        <taxon>Archaea</taxon>
        <taxon>Methanobacteriati</taxon>
        <taxon>Methanobacteriota</taxon>
        <taxon>Archaeoglobi</taxon>
        <taxon>Archaeoglobales</taxon>
        <taxon>Archaeoglobaceae</taxon>
        <taxon>Archaeoglobus</taxon>
    </lineage>
</organism>
<name>ACD1_ARCFU</name>